<accession>Q39165</accession>
<accession>Q39164</accession>
<accession>Q41911</accession>
<dbReference type="EMBL" id="L40954">
    <property type="protein sequence ID" value="AAA87295.1"/>
    <property type="molecule type" value="mRNA"/>
</dbReference>
<dbReference type="EMBL" id="X91956">
    <property type="protein sequence ID" value="CAA63022.1"/>
    <property type="molecule type" value="mRNA"/>
</dbReference>
<dbReference type="EMBL" id="AB006702">
    <property type="protein sequence ID" value="BAB11599.1"/>
    <property type="molecule type" value="Genomic_DNA"/>
</dbReference>
<dbReference type="EMBL" id="CP002688">
    <property type="protein sequence ID" value="AED94546.1"/>
    <property type="molecule type" value="Genomic_DNA"/>
</dbReference>
<dbReference type="EMBL" id="AY057590">
    <property type="protein sequence ID" value="AAL14385.1"/>
    <property type="molecule type" value="mRNA"/>
</dbReference>
<dbReference type="EMBL" id="AY113011">
    <property type="protein sequence ID" value="AAM47319.1"/>
    <property type="molecule type" value="mRNA"/>
</dbReference>
<dbReference type="EMBL" id="Z17657">
    <property type="protein sequence ID" value="CAA79025.1"/>
    <property type="molecule type" value="mRNA"/>
</dbReference>
<dbReference type="PIR" id="S71253">
    <property type="entry name" value="S71253"/>
</dbReference>
<dbReference type="BioGRID" id="19291">
    <property type="interactions" value="31"/>
</dbReference>
<dbReference type="FunCoup" id="Q39165">
    <property type="interactions" value="173"/>
</dbReference>
<dbReference type="IntAct" id="Q39165">
    <property type="interactions" value="27"/>
</dbReference>
<dbReference type="STRING" id="3702.Q39165"/>
<dbReference type="iPTMnet" id="Q39165"/>
<dbReference type="PaxDb" id="3702-AT5G40420.1"/>
<dbReference type="ProteomicsDB" id="250807"/>
<dbReference type="EnsemblPlants" id="AT5G40420.1">
    <property type="protein sequence ID" value="AT5G40420.1"/>
    <property type="gene ID" value="AT5G40420"/>
</dbReference>
<dbReference type="Gramene" id="AT5G40420.1">
    <property type="protein sequence ID" value="AT5G40420.1"/>
    <property type="gene ID" value="AT5G40420"/>
</dbReference>
<dbReference type="KEGG" id="ath:AT5G40420"/>
<dbReference type="Araport" id="AT5G40420"/>
<dbReference type="TAIR" id="AT5G40420">
    <property type="gene designation" value="OLEO2"/>
</dbReference>
<dbReference type="eggNOG" id="ENOG502S1R0">
    <property type="taxonomic scope" value="Eukaryota"/>
</dbReference>
<dbReference type="HOGENOM" id="CLU_101983_1_0_1"/>
<dbReference type="InParanoid" id="Q39165"/>
<dbReference type="OMA" id="SWMINYM"/>
<dbReference type="OrthoDB" id="1929188at2759"/>
<dbReference type="PhylomeDB" id="Q39165"/>
<dbReference type="PRO" id="PR:Q39165"/>
<dbReference type="Proteomes" id="UP000006548">
    <property type="component" value="Chromosome 5"/>
</dbReference>
<dbReference type="ExpressionAtlas" id="Q39165">
    <property type="expression patterns" value="baseline and differential"/>
</dbReference>
<dbReference type="GO" id="GO:0016020">
    <property type="term" value="C:membrane"/>
    <property type="evidence" value="ECO:0007669"/>
    <property type="project" value="UniProtKB-SubCell"/>
</dbReference>
<dbReference type="GO" id="GO:0012511">
    <property type="term" value="C:monolayer-surrounded lipid storage body"/>
    <property type="evidence" value="ECO:0000314"/>
    <property type="project" value="TAIR"/>
</dbReference>
<dbReference type="GO" id="GO:0003729">
    <property type="term" value="F:mRNA binding"/>
    <property type="evidence" value="ECO:0007005"/>
    <property type="project" value="TAIR"/>
</dbReference>
<dbReference type="GO" id="GO:0019915">
    <property type="term" value="P:lipid storage"/>
    <property type="evidence" value="ECO:0000315"/>
    <property type="project" value="TAIR"/>
</dbReference>
<dbReference type="GO" id="GO:0050826">
    <property type="term" value="P:response to freezing"/>
    <property type="evidence" value="ECO:0000315"/>
    <property type="project" value="TAIR"/>
</dbReference>
<dbReference type="GO" id="GO:0009845">
    <property type="term" value="P:seed germination"/>
    <property type="evidence" value="ECO:0000316"/>
    <property type="project" value="TAIR"/>
</dbReference>
<dbReference type="GO" id="GO:0010344">
    <property type="term" value="P:seed oilbody biogenesis"/>
    <property type="evidence" value="ECO:0000315"/>
    <property type="project" value="TAIR"/>
</dbReference>
<dbReference type="InterPro" id="IPR000136">
    <property type="entry name" value="Oleosin"/>
</dbReference>
<dbReference type="PANTHER" id="PTHR33203">
    <property type="entry name" value="OLEOSIN"/>
    <property type="match status" value="1"/>
</dbReference>
<dbReference type="PANTHER" id="PTHR33203:SF32">
    <property type="entry name" value="OLEOSIN 21.2 KDA"/>
    <property type="match status" value="1"/>
</dbReference>
<dbReference type="Pfam" id="PF01277">
    <property type="entry name" value="Oleosin"/>
    <property type="match status" value="1"/>
</dbReference>
<keyword id="KW-0007">Acetylation</keyword>
<keyword id="KW-0551">Lipid droplet</keyword>
<keyword id="KW-0472">Membrane</keyword>
<keyword id="KW-1185">Reference proteome</keyword>
<keyword id="KW-0812">Transmembrane</keyword>
<keyword id="KW-1133">Transmembrane helix</keyword>
<sequence>MADTHRVDRTDRHFQFQSPYEGGRGQGQYEGDRGYGGGGYKSMMPESGPSSTQVLSLLIGVPVVGSLLALAGLLLAGSVIGLMVALPLFLLFSPVIVPAALTIGLAMTGFLASGMFGLTGLSSISWVMNYLRGTRRTVPEQLEYAKRRMADAVGYAGQKGKEMGQHVQNKAQDVKQYDISKPHDTTTKGHETQGRTTAA</sequence>
<evidence type="ECO:0000250" key="1"/>
<evidence type="ECO:0000250" key="2">
    <source>
        <dbReference type="UniProtKB" id="C3S7F1"/>
    </source>
</evidence>
<evidence type="ECO:0000255" key="3"/>
<evidence type="ECO:0000256" key="4">
    <source>
        <dbReference type="SAM" id="MobiDB-lite"/>
    </source>
</evidence>
<evidence type="ECO:0000269" key="5">
    <source>
    </source>
</evidence>
<evidence type="ECO:0000305" key="6"/>
<gene>
    <name type="ordered locus">At5g40420</name>
    <name type="ORF">MPO12.17</name>
</gene>
<organism>
    <name type="scientific">Arabidopsis thaliana</name>
    <name type="common">Mouse-ear cress</name>
    <dbReference type="NCBI Taxonomy" id="3702"/>
    <lineage>
        <taxon>Eukaryota</taxon>
        <taxon>Viridiplantae</taxon>
        <taxon>Streptophyta</taxon>
        <taxon>Embryophyta</taxon>
        <taxon>Tracheophyta</taxon>
        <taxon>Spermatophyta</taxon>
        <taxon>Magnoliopsida</taxon>
        <taxon>eudicotyledons</taxon>
        <taxon>Gunneridae</taxon>
        <taxon>Pentapetalae</taxon>
        <taxon>rosids</taxon>
        <taxon>malvids</taxon>
        <taxon>Brassicales</taxon>
        <taxon>Brassicaceae</taxon>
        <taxon>Camelineae</taxon>
        <taxon>Arabidopsis</taxon>
    </lineage>
</organism>
<comment type="function">
    <text evidence="1">May have a structural role to stabilize the lipid body during desiccation of the seed by preventing coalescence of the oil. Probably interacts with both lipid and phospholipid moieties of lipid bodies. May also provide recognition signals for specific lipase anchorage in lipolysis during seedling growth (By similarity).</text>
</comment>
<comment type="subcellular location">
    <subcellularLocation>
        <location evidence="1">Lipid droplet</location>
    </subcellularLocation>
    <subcellularLocation>
        <location evidence="1">Membrane</location>
        <topology evidence="1">Multi-pass membrane protein</topology>
    </subcellularLocation>
    <text evidence="1">Surface of oil bodies. Oleosins exist at a monolayer lipid/water interface (By similarity).</text>
</comment>
<comment type="developmental stage">
    <text evidence="5">In siliques, expression is first detected at stage 7 when the siliques are green-brown. Expression then rises steadily to reach a maximum at maturity.</text>
</comment>
<comment type="similarity">
    <text evidence="6">Belongs to the oleosin family.</text>
</comment>
<proteinExistence type="evidence at transcript level"/>
<feature type="initiator methionine" description="Removed" evidence="2">
    <location>
        <position position="1"/>
    </location>
</feature>
<feature type="chain" id="PRO_0000108128" description="Oleosin 21.2 kDa">
    <location>
        <begin position="2"/>
        <end position="199"/>
    </location>
</feature>
<feature type="transmembrane region" description="Helical" evidence="3">
    <location>
        <begin position="51"/>
        <end position="71"/>
    </location>
</feature>
<feature type="transmembrane region" description="Helical" evidence="3">
    <location>
        <begin position="72"/>
        <end position="92"/>
    </location>
</feature>
<feature type="transmembrane region" description="Helical" evidence="3">
    <location>
        <begin position="96"/>
        <end position="116"/>
    </location>
</feature>
<feature type="region of interest" description="Disordered" evidence="4">
    <location>
        <begin position="1"/>
        <end position="31"/>
    </location>
</feature>
<feature type="region of interest" description="Polar">
    <location>
        <begin position="2"/>
        <end position="56"/>
    </location>
</feature>
<feature type="region of interest" description="Hydrophobic">
    <location>
        <begin position="57"/>
        <end position="128"/>
    </location>
</feature>
<feature type="region of interest" description="Disordered" evidence="4">
    <location>
        <begin position="159"/>
        <end position="199"/>
    </location>
</feature>
<feature type="compositionally biased region" description="Basic and acidic residues" evidence="4">
    <location>
        <begin position="1"/>
        <end position="14"/>
    </location>
</feature>
<feature type="compositionally biased region" description="Gly residues" evidence="4">
    <location>
        <begin position="22"/>
        <end position="31"/>
    </location>
</feature>
<feature type="compositionally biased region" description="Basic and acidic residues" evidence="4">
    <location>
        <begin position="172"/>
        <end position="193"/>
    </location>
</feature>
<feature type="modified residue" description="N-acetylalanine" evidence="2">
    <location>
        <position position="2"/>
    </location>
</feature>
<feature type="sequence conflict" description="In Ref. 6; CAA79025." evidence="6" ref="6">
    <original>S</original>
    <variation>A</variation>
    <location>
        <position position="93"/>
    </location>
</feature>
<feature type="sequence conflict" description="In Ref. 2; CAA63022." evidence="6" ref="2">
    <original>A</original>
    <variation>G</variation>
    <location>
        <position position="100"/>
    </location>
</feature>
<feature type="sequence conflict" description="In Ref. 2; CAA63022." evidence="6" ref="2">
    <original>R</original>
    <variation>K</variation>
    <location>
        <position position="135"/>
    </location>
</feature>
<feature type="sequence conflict" description="In Ref. 2; CAA63022." evidence="6" ref="2">
    <original>R</original>
    <variation>G</variation>
    <location>
        <position position="195"/>
    </location>
</feature>
<name>OLEO2_ARATH</name>
<protein>
    <recommendedName>
        <fullName>Oleosin 21.2 kDa</fullName>
    </recommendedName>
    <alternativeName>
        <fullName>Oleosin type 2</fullName>
    </alternativeName>
</protein>
<reference key="1">
    <citation type="journal article" date="1996" name="Plant Mol. Biol.">
        <title>Cloning of a cDNA encoding the 21.2 kDa oleosin isoform from Arabidopsis thaliana and a study of its expression in a mutant defective in diacylglycerol acyltransferase activity.</title>
        <authorList>
            <person name="Zou J."/>
            <person name="Brokx S.J."/>
            <person name="Taylor D.C."/>
        </authorList>
    </citation>
    <scope>NUCLEOTIDE SEQUENCE [MRNA]</scope>
    <scope>DEVELOPMENTAL STAGE</scope>
    <source>
        <strain>cv. Columbia</strain>
        <tissue>Silique</tissue>
    </source>
</reference>
<reference key="2">
    <citation type="submission" date="1995-10" db="EMBL/GenBank/DDBJ databases">
        <authorList>
            <person name="Grellet F."/>
            <person name="Cooke R."/>
            <person name="Laudie M."/>
            <person name="Raynal M."/>
            <person name="Delseny M."/>
        </authorList>
    </citation>
    <scope>NUCLEOTIDE SEQUENCE [MRNA]</scope>
    <source>
        <strain>cv. Columbia</strain>
        <tissue>Silique</tissue>
    </source>
</reference>
<reference key="3">
    <citation type="journal article" date="1997" name="DNA Res.">
        <title>Structural analysis of Arabidopsis thaliana chromosome 5. II. Sequence features of the regions of 1,044,062 bp covered by thirteen physically assigned P1 clones.</title>
        <authorList>
            <person name="Kotani H."/>
            <person name="Nakamura Y."/>
            <person name="Sato S."/>
            <person name="Kaneko T."/>
            <person name="Asamizu E."/>
            <person name="Miyajima N."/>
            <person name="Tabata S."/>
        </authorList>
    </citation>
    <scope>NUCLEOTIDE SEQUENCE [LARGE SCALE GENOMIC DNA]</scope>
    <source>
        <strain>cv. Columbia</strain>
    </source>
</reference>
<reference key="4">
    <citation type="journal article" date="2017" name="Plant J.">
        <title>Araport11: a complete reannotation of the Arabidopsis thaliana reference genome.</title>
        <authorList>
            <person name="Cheng C.Y."/>
            <person name="Krishnakumar V."/>
            <person name="Chan A.P."/>
            <person name="Thibaud-Nissen F."/>
            <person name="Schobel S."/>
            <person name="Town C.D."/>
        </authorList>
    </citation>
    <scope>GENOME REANNOTATION</scope>
    <source>
        <strain>cv. Columbia</strain>
    </source>
</reference>
<reference key="5">
    <citation type="journal article" date="2003" name="Science">
        <title>Empirical analysis of transcriptional activity in the Arabidopsis genome.</title>
        <authorList>
            <person name="Yamada K."/>
            <person name="Lim J."/>
            <person name="Dale J.M."/>
            <person name="Chen H."/>
            <person name="Shinn P."/>
            <person name="Palm C.J."/>
            <person name="Southwick A.M."/>
            <person name="Wu H.C."/>
            <person name="Kim C.J."/>
            <person name="Nguyen M."/>
            <person name="Pham P.K."/>
            <person name="Cheuk R.F."/>
            <person name="Karlin-Newmann G."/>
            <person name="Liu S.X."/>
            <person name="Lam B."/>
            <person name="Sakano H."/>
            <person name="Wu T."/>
            <person name="Yu G."/>
            <person name="Miranda M."/>
            <person name="Quach H.L."/>
            <person name="Tripp M."/>
            <person name="Chang C.H."/>
            <person name="Lee J.M."/>
            <person name="Toriumi M.J."/>
            <person name="Chan M.M."/>
            <person name="Tang C.C."/>
            <person name="Onodera C.S."/>
            <person name="Deng J.M."/>
            <person name="Akiyama K."/>
            <person name="Ansari Y."/>
            <person name="Arakawa T."/>
            <person name="Banh J."/>
            <person name="Banno F."/>
            <person name="Bowser L."/>
            <person name="Brooks S.Y."/>
            <person name="Carninci P."/>
            <person name="Chao Q."/>
            <person name="Choy N."/>
            <person name="Enju A."/>
            <person name="Goldsmith A.D."/>
            <person name="Gurjal M."/>
            <person name="Hansen N.F."/>
            <person name="Hayashizaki Y."/>
            <person name="Johnson-Hopson C."/>
            <person name="Hsuan V.W."/>
            <person name="Iida K."/>
            <person name="Karnes M."/>
            <person name="Khan S."/>
            <person name="Koesema E."/>
            <person name="Ishida J."/>
            <person name="Jiang P.X."/>
            <person name="Jones T."/>
            <person name="Kawai J."/>
            <person name="Kamiya A."/>
            <person name="Meyers C."/>
            <person name="Nakajima M."/>
            <person name="Narusaka M."/>
            <person name="Seki M."/>
            <person name="Sakurai T."/>
            <person name="Satou M."/>
            <person name="Tamse R."/>
            <person name="Vaysberg M."/>
            <person name="Wallender E.K."/>
            <person name="Wong C."/>
            <person name="Yamamura Y."/>
            <person name="Yuan S."/>
            <person name="Shinozaki K."/>
            <person name="Davis R.W."/>
            <person name="Theologis A."/>
            <person name="Ecker J.R."/>
        </authorList>
    </citation>
    <scope>NUCLEOTIDE SEQUENCE [LARGE SCALE MRNA]</scope>
    <source>
        <strain>cv. Columbia</strain>
    </source>
</reference>
<reference key="6">
    <citation type="journal article" date="1993" name="Plant J.">
        <title>An inventory of 1152 expressed sequence tags obtained by partial sequencing of cDNAs from Arabidopsis thaliana.</title>
        <authorList>
            <person name="Hoefte H."/>
            <person name="Desprez T."/>
            <person name="Amselem J."/>
            <person name="Chiapello H."/>
            <person name="Rouze P."/>
            <person name="Caboche M."/>
            <person name="Moisan A."/>
            <person name="Jourjon M.-F."/>
            <person name="Charpenteau J.-L."/>
            <person name="Berthomieu P."/>
            <person name="Guerrier D."/>
            <person name="Giraudat J."/>
            <person name="Quigley F."/>
            <person name="Thomas F."/>
            <person name="Yu D.-Y."/>
            <person name="Mache R."/>
            <person name="Raynal M."/>
            <person name="Cooke R."/>
            <person name="Grellet F."/>
            <person name="Delseny M."/>
            <person name="Parmentier Y."/>
            <person name="de Marcillac G."/>
            <person name="Gigot C."/>
            <person name="Fleck J."/>
            <person name="Philipps G."/>
            <person name="Axelos M."/>
            <person name="Bardet C."/>
            <person name="Tremousaygue D."/>
            <person name="Lescure B."/>
        </authorList>
    </citation>
    <scope>NUCLEOTIDE SEQUENCE [LARGE SCALE MRNA] OF 1-111</scope>
    <source>
        <strain>cv. Columbia</strain>
        <tissue>Green siliques</tissue>
    </source>
</reference>